<proteinExistence type="inferred from homology"/>
<evidence type="ECO:0000255" key="1">
    <source>
        <dbReference type="HAMAP-Rule" id="MF_00212"/>
    </source>
</evidence>
<comment type="catalytic activity">
    <reaction evidence="1">
        <text>(S)-malate + a quinone = a quinol + oxaloacetate</text>
        <dbReference type="Rhea" id="RHEA:46012"/>
        <dbReference type="ChEBI" id="CHEBI:15589"/>
        <dbReference type="ChEBI" id="CHEBI:16452"/>
        <dbReference type="ChEBI" id="CHEBI:24646"/>
        <dbReference type="ChEBI" id="CHEBI:132124"/>
        <dbReference type="EC" id="1.1.5.4"/>
    </reaction>
</comment>
<comment type="cofactor">
    <cofactor evidence="1">
        <name>FAD</name>
        <dbReference type="ChEBI" id="CHEBI:57692"/>
    </cofactor>
</comment>
<comment type="pathway">
    <text evidence="1">Carbohydrate metabolism; tricarboxylic acid cycle; oxaloacetate from (S)-malate (quinone route): step 1/1.</text>
</comment>
<comment type="similarity">
    <text evidence="1">Belongs to the MQO family.</text>
</comment>
<name>MQO_NEIM0</name>
<dbReference type="EC" id="1.1.5.4" evidence="1"/>
<dbReference type="EMBL" id="CP000381">
    <property type="protein sequence ID" value="ABX74179.1"/>
    <property type="molecule type" value="Genomic_DNA"/>
</dbReference>
<dbReference type="RefSeq" id="WP_002258396.1">
    <property type="nucleotide sequence ID" value="NC_010120.1"/>
</dbReference>
<dbReference type="SMR" id="A9M485"/>
<dbReference type="KEGG" id="nmn:NMCC_2061"/>
<dbReference type="HOGENOM" id="CLU_028151_0_0_4"/>
<dbReference type="UniPathway" id="UPA00223">
    <property type="reaction ID" value="UER01008"/>
</dbReference>
<dbReference type="Proteomes" id="UP000001177">
    <property type="component" value="Chromosome"/>
</dbReference>
<dbReference type="GO" id="GO:0047545">
    <property type="term" value="F:2-hydroxyglutarate dehydrogenase activity"/>
    <property type="evidence" value="ECO:0007669"/>
    <property type="project" value="TreeGrafter"/>
</dbReference>
<dbReference type="GO" id="GO:0008924">
    <property type="term" value="F:L-malate dehydrogenase (quinone) activity"/>
    <property type="evidence" value="ECO:0007669"/>
    <property type="project" value="UniProtKB-UniRule"/>
</dbReference>
<dbReference type="GO" id="GO:0006099">
    <property type="term" value="P:tricarboxylic acid cycle"/>
    <property type="evidence" value="ECO:0007669"/>
    <property type="project" value="UniProtKB-UniRule"/>
</dbReference>
<dbReference type="Gene3D" id="3.30.9.10">
    <property type="entry name" value="D-Amino Acid Oxidase, subunit A, domain 2"/>
    <property type="match status" value="1"/>
</dbReference>
<dbReference type="Gene3D" id="3.50.50.60">
    <property type="entry name" value="FAD/NAD(P)-binding domain"/>
    <property type="match status" value="1"/>
</dbReference>
<dbReference type="HAMAP" id="MF_00212">
    <property type="entry name" value="MQO"/>
    <property type="match status" value="1"/>
</dbReference>
<dbReference type="InterPro" id="IPR036188">
    <property type="entry name" value="FAD/NAD-bd_sf"/>
</dbReference>
<dbReference type="InterPro" id="IPR006231">
    <property type="entry name" value="MQO"/>
</dbReference>
<dbReference type="NCBIfam" id="TIGR01320">
    <property type="entry name" value="mal_quin_oxido"/>
    <property type="match status" value="1"/>
</dbReference>
<dbReference type="NCBIfam" id="NF003603">
    <property type="entry name" value="PRK05257.1-1"/>
    <property type="match status" value="1"/>
</dbReference>
<dbReference type="NCBIfam" id="NF003605">
    <property type="entry name" value="PRK05257.1-4"/>
    <property type="match status" value="1"/>
</dbReference>
<dbReference type="NCBIfam" id="NF003606">
    <property type="entry name" value="PRK05257.2-1"/>
    <property type="match status" value="1"/>
</dbReference>
<dbReference type="NCBIfam" id="NF003609">
    <property type="entry name" value="PRK05257.2-5"/>
    <property type="match status" value="1"/>
</dbReference>
<dbReference type="NCBIfam" id="NF003610">
    <property type="entry name" value="PRK05257.3-1"/>
    <property type="match status" value="1"/>
</dbReference>
<dbReference type="NCBIfam" id="NF003611">
    <property type="entry name" value="PRK05257.3-2"/>
    <property type="match status" value="1"/>
</dbReference>
<dbReference type="NCBIfam" id="NF009875">
    <property type="entry name" value="PRK13339.1"/>
    <property type="match status" value="1"/>
</dbReference>
<dbReference type="PANTHER" id="PTHR43104">
    <property type="entry name" value="L-2-HYDROXYGLUTARATE DEHYDROGENASE, MITOCHONDRIAL"/>
    <property type="match status" value="1"/>
</dbReference>
<dbReference type="PANTHER" id="PTHR43104:SF2">
    <property type="entry name" value="L-2-HYDROXYGLUTARATE DEHYDROGENASE, MITOCHONDRIAL"/>
    <property type="match status" value="1"/>
</dbReference>
<dbReference type="Pfam" id="PF06039">
    <property type="entry name" value="Mqo"/>
    <property type="match status" value="1"/>
</dbReference>
<dbReference type="SUPFAM" id="SSF51905">
    <property type="entry name" value="FAD/NAD(P)-binding domain"/>
    <property type="match status" value="1"/>
</dbReference>
<keyword id="KW-0274">FAD</keyword>
<keyword id="KW-0285">Flavoprotein</keyword>
<keyword id="KW-0560">Oxidoreductase</keyword>
<keyword id="KW-0816">Tricarboxylic acid cycle</keyword>
<gene>
    <name evidence="1" type="primary">mqo</name>
    <name type="ordered locus">NMCC_2061</name>
</gene>
<reference key="1">
    <citation type="journal article" date="2008" name="Genomics">
        <title>Characterization of ST-4821 complex, a unique Neisseria meningitidis clone.</title>
        <authorList>
            <person name="Peng J."/>
            <person name="Yang L."/>
            <person name="Yang F."/>
            <person name="Yang J."/>
            <person name="Yan Y."/>
            <person name="Nie H."/>
            <person name="Zhang X."/>
            <person name="Xiong Z."/>
            <person name="Jiang Y."/>
            <person name="Cheng F."/>
            <person name="Xu X."/>
            <person name="Chen S."/>
            <person name="Sun L."/>
            <person name="Li W."/>
            <person name="Shen Y."/>
            <person name="Shao Z."/>
            <person name="Liang X."/>
            <person name="Xu J."/>
            <person name="Jin Q."/>
        </authorList>
    </citation>
    <scope>NUCLEOTIDE SEQUENCE [LARGE SCALE GENOMIC DNA]</scope>
    <source>
        <strain>053442</strain>
    </source>
</reference>
<accession>A9M485</accession>
<feature type="chain" id="PRO_1000078034" description="Probable malate:quinone oxidoreductase">
    <location>
        <begin position="1"/>
        <end position="488"/>
    </location>
</feature>
<protein>
    <recommendedName>
        <fullName evidence="1">Probable malate:quinone oxidoreductase</fullName>
        <ecNumber evidence="1">1.1.5.4</ecNumber>
    </recommendedName>
    <alternativeName>
        <fullName evidence="1">MQO</fullName>
    </alternativeName>
    <alternativeName>
        <fullName evidence="1">Malate dehydrogenase [quinone]</fullName>
    </alternativeName>
</protein>
<organism>
    <name type="scientific">Neisseria meningitidis serogroup C (strain 053442)</name>
    <dbReference type="NCBI Taxonomy" id="374833"/>
    <lineage>
        <taxon>Bacteria</taxon>
        <taxon>Pseudomonadati</taxon>
        <taxon>Pseudomonadota</taxon>
        <taxon>Betaproteobacteria</taxon>
        <taxon>Neisseriales</taxon>
        <taxon>Neisseriaceae</taxon>
        <taxon>Neisseria</taxon>
    </lineage>
</organism>
<sequence length="488" mass="53896">MAEATDVVLVGGGIMSATLGVLLKELEPSWEITLIERLEDVALESSNAWNNAGTGHSALCELNYAPLGANGIIDPARALNIAEQFHVSRQFWATLVAEGKLEDNSFINAVPHMSLVMNEDHCSYLQKRYDAFKTQKLFENMEFSTDRNKISDWAPLMMRGRDENQPVAANYSAEGTDVDFGRLTRQMVKYLQGKGVKTEFNRHVEDIKRESDGAWVLKTADTRNPDGQLTLRTRFLFLGAGGGALTLLQKSGIPEGKGYGGFPVSGLFFRNSNPETAGQHNAKVYGQASVGAPPMSVPHLDTRNVDGKRHLMFGPYAGFRSNFLKQGSLMDLPLSIHMDNLYPMLCAGWANMPLTKYLLGELRKTKEERFASLLEYYPEANPDDWELITAGQRVQIIKKDSEKGGVLQFGTEIVAHADGSLAALLGASPGASTAVPLMIRLMHQCFPERAPSWEDRLKELVPGYGIKLNENPERADEIIAYTAKVLDI</sequence>